<comment type="function">
    <text evidence="2">Small subunit of the glutamine-dependent carbamoyl phosphate synthetase (CPSase). CPSase catalyzes the formation of carbamoyl phosphate from the ammonia moiety of glutamine, carbonate, and phosphate donated by ATP, constituting the first step of the biosynthetic pathway leading to arginine and/or urea. The small subunit (glutamine amidotransferase) binds and cleaves glutamine to supply the large subunit with the substrate ammonia.</text>
</comment>
<comment type="catalytic activity">
    <reaction evidence="1">
        <text>hydrogencarbonate + L-glutamine + 2 ATP + H2O = carbamoyl phosphate + L-glutamate + 2 ADP + phosphate + 2 H(+)</text>
        <dbReference type="Rhea" id="RHEA:18633"/>
        <dbReference type="ChEBI" id="CHEBI:15377"/>
        <dbReference type="ChEBI" id="CHEBI:15378"/>
        <dbReference type="ChEBI" id="CHEBI:17544"/>
        <dbReference type="ChEBI" id="CHEBI:29985"/>
        <dbReference type="ChEBI" id="CHEBI:30616"/>
        <dbReference type="ChEBI" id="CHEBI:43474"/>
        <dbReference type="ChEBI" id="CHEBI:58228"/>
        <dbReference type="ChEBI" id="CHEBI:58359"/>
        <dbReference type="ChEBI" id="CHEBI:456216"/>
        <dbReference type="EC" id="6.3.5.5"/>
    </reaction>
</comment>
<comment type="catalytic activity">
    <molecule>Carbamoyl phosphate synthase arginine-specific small chain</molecule>
    <reaction evidence="1">
        <text>L-glutamine + H2O = L-glutamate + NH4(+)</text>
        <dbReference type="Rhea" id="RHEA:15889"/>
        <dbReference type="ChEBI" id="CHEBI:15377"/>
        <dbReference type="ChEBI" id="CHEBI:28938"/>
        <dbReference type="ChEBI" id="CHEBI:29985"/>
        <dbReference type="ChEBI" id="CHEBI:58359"/>
    </reaction>
</comment>
<comment type="pathway">
    <text evidence="1">Amino-acid biosynthesis; L-arginine biosynthesis; carbamoyl phosphate from bicarbonate: step 1/1.</text>
</comment>
<comment type="subunit">
    <text evidence="1">Composed of two chains; the small (or glutamine) chain promotes the hydrolysis of glutamine to ammonia, which is used by the large (or ammonia) chain to synthesize carbamoyl phosphate. Tetramer of heterodimers (alpha,beta)4.</text>
</comment>
<comment type="similarity">
    <text evidence="1">Belongs to the CarA family.</text>
</comment>
<keyword id="KW-0028">Amino-acid biosynthesis</keyword>
<keyword id="KW-0055">Arginine biosynthesis</keyword>
<keyword id="KW-0067">ATP-binding</keyword>
<keyword id="KW-0315">Glutamine amidotransferase</keyword>
<keyword id="KW-0436">Ligase</keyword>
<keyword id="KW-0547">Nucleotide-binding</keyword>
<keyword id="KW-1185">Reference proteome</keyword>
<proteinExistence type="inferred from homology"/>
<sequence>MKAYLVLATGETFAGEIANAKEDVYGEVVFFTGMTGYQEVLSDPSFKGQLVVFTYPLIGNYGINASDFESKEPQAAGLIVSEQSEEGHHYEATQSLQQFCDQHQLPLLTGIDTRAVVKRIREQGDMPAVITTDLSRVSFEEWVPLSERALVDEVSTKKVETFEGNGPHIVLIDYGFKQSILNSLLKRDCQVTIVPYDVSFEVVQELNPDGLLFSNGPGDPKQIEDRLPTIYRLASTYPSLGICLGHQLLALAFGADTEKLRFGHRGANQPVINLKSNRVYMTSQNHSYVVKEDSLQRTDWDATFKNINDGSIEGLTHKYLPIQTVQFHPEAHPGPSDSDEIFHSFIDDVAAKGREKTYA</sequence>
<name>CARX_HALH5</name>
<protein>
    <recommendedName>
        <fullName evidence="2">Carbamoyl phosphate synthase arginine-specific small chain</fullName>
        <ecNumber evidence="1">6.3.5.5</ecNumber>
    </recommendedName>
    <alternativeName>
        <fullName evidence="1">Carbamoyl phosphate synthetase glutamine chain 2</fullName>
    </alternativeName>
</protein>
<accession>Q9K8V6</accession>
<gene>
    <name evidence="1" type="primary">carA</name>
    <name type="ordered locus">BH2896</name>
</gene>
<evidence type="ECO:0000255" key="1">
    <source>
        <dbReference type="HAMAP-Rule" id="MF_01209"/>
    </source>
</evidence>
<evidence type="ECO:0000305" key="2"/>
<feature type="chain" id="PRO_0000112252" description="Carbamoyl phosphate synthase arginine-specific small chain">
    <location>
        <begin position="1"/>
        <end position="359"/>
    </location>
</feature>
<feature type="domain" description="Glutamine amidotransferase type-1" evidence="1">
    <location>
        <begin position="168"/>
        <end position="355"/>
    </location>
</feature>
<feature type="region of interest" description="CPSase" evidence="1">
    <location>
        <begin position="1"/>
        <end position="168"/>
    </location>
</feature>
<feature type="active site" description="Nucleophile" evidence="1">
    <location>
        <position position="243"/>
    </location>
</feature>
<feature type="active site" evidence="1">
    <location>
        <position position="328"/>
    </location>
</feature>
<feature type="active site" evidence="1">
    <location>
        <position position="330"/>
    </location>
</feature>
<feature type="binding site" evidence="1">
    <location>
        <position position="45"/>
    </location>
    <ligand>
        <name>L-glutamine</name>
        <dbReference type="ChEBI" id="CHEBI:58359"/>
    </ligand>
</feature>
<feature type="binding site" evidence="1">
    <location>
        <position position="216"/>
    </location>
    <ligand>
        <name>L-glutamine</name>
        <dbReference type="ChEBI" id="CHEBI:58359"/>
    </ligand>
</feature>
<feature type="binding site" evidence="1">
    <location>
        <position position="218"/>
    </location>
    <ligand>
        <name>L-glutamine</name>
        <dbReference type="ChEBI" id="CHEBI:58359"/>
    </ligand>
</feature>
<feature type="binding site" evidence="1">
    <location>
        <position position="244"/>
    </location>
    <ligand>
        <name>L-glutamine</name>
        <dbReference type="ChEBI" id="CHEBI:58359"/>
    </ligand>
</feature>
<feature type="binding site" evidence="1">
    <location>
        <position position="247"/>
    </location>
    <ligand>
        <name>L-glutamine</name>
        <dbReference type="ChEBI" id="CHEBI:58359"/>
    </ligand>
</feature>
<feature type="binding site" evidence="1">
    <location>
        <position position="285"/>
    </location>
    <ligand>
        <name>L-glutamine</name>
        <dbReference type="ChEBI" id="CHEBI:58359"/>
    </ligand>
</feature>
<feature type="binding site" evidence="1">
    <location>
        <position position="288"/>
    </location>
    <ligand>
        <name>L-glutamine</name>
        <dbReference type="ChEBI" id="CHEBI:58359"/>
    </ligand>
</feature>
<organism>
    <name type="scientific">Halalkalibacterium halodurans (strain ATCC BAA-125 / DSM 18197 / FERM 7344 / JCM 9153 / C-125)</name>
    <name type="common">Bacillus halodurans</name>
    <dbReference type="NCBI Taxonomy" id="272558"/>
    <lineage>
        <taxon>Bacteria</taxon>
        <taxon>Bacillati</taxon>
        <taxon>Bacillota</taxon>
        <taxon>Bacilli</taxon>
        <taxon>Bacillales</taxon>
        <taxon>Bacillaceae</taxon>
        <taxon>Halalkalibacterium (ex Joshi et al. 2022)</taxon>
    </lineage>
</organism>
<dbReference type="EC" id="6.3.5.5" evidence="1"/>
<dbReference type="EMBL" id="BA000004">
    <property type="protein sequence ID" value="BAB06615.1"/>
    <property type="molecule type" value="Genomic_DNA"/>
</dbReference>
<dbReference type="PIR" id="H84011">
    <property type="entry name" value="H84011"/>
</dbReference>
<dbReference type="RefSeq" id="WP_010899043.1">
    <property type="nucleotide sequence ID" value="NC_002570.2"/>
</dbReference>
<dbReference type="SMR" id="Q9K8V6"/>
<dbReference type="STRING" id="272558.gene:10728806"/>
<dbReference type="MEROPS" id="C26.963"/>
<dbReference type="GeneID" id="87598423"/>
<dbReference type="KEGG" id="bha:BH2896"/>
<dbReference type="eggNOG" id="COG0505">
    <property type="taxonomic scope" value="Bacteria"/>
</dbReference>
<dbReference type="HOGENOM" id="CLU_035901_2_1_9"/>
<dbReference type="OrthoDB" id="9804328at2"/>
<dbReference type="UniPathway" id="UPA00068">
    <property type="reaction ID" value="UER00171"/>
</dbReference>
<dbReference type="Proteomes" id="UP000001258">
    <property type="component" value="Chromosome"/>
</dbReference>
<dbReference type="GO" id="GO:0005524">
    <property type="term" value="F:ATP binding"/>
    <property type="evidence" value="ECO:0007669"/>
    <property type="project" value="UniProtKB-UniRule"/>
</dbReference>
<dbReference type="GO" id="GO:0004088">
    <property type="term" value="F:carbamoyl-phosphate synthase (glutamine-hydrolyzing) activity"/>
    <property type="evidence" value="ECO:0007669"/>
    <property type="project" value="UniProtKB-UniRule"/>
</dbReference>
<dbReference type="GO" id="GO:0004359">
    <property type="term" value="F:glutaminase activity"/>
    <property type="evidence" value="ECO:0007669"/>
    <property type="project" value="RHEA"/>
</dbReference>
<dbReference type="GO" id="GO:0006207">
    <property type="term" value="P:'de novo' pyrimidine nucleobase biosynthetic process"/>
    <property type="evidence" value="ECO:0007669"/>
    <property type="project" value="InterPro"/>
</dbReference>
<dbReference type="GO" id="GO:0044205">
    <property type="term" value="P:'de novo' UMP biosynthetic process"/>
    <property type="evidence" value="ECO:0007669"/>
    <property type="project" value="UniProtKB-UniRule"/>
</dbReference>
<dbReference type="GO" id="GO:0006541">
    <property type="term" value="P:glutamine metabolic process"/>
    <property type="evidence" value="ECO:0007669"/>
    <property type="project" value="InterPro"/>
</dbReference>
<dbReference type="GO" id="GO:0006526">
    <property type="term" value="P:L-arginine biosynthetic process"/>
    <property type="evidence" value="ECO:0007669"/>
    <property type="project" value="UniProtKB-UniRule"/>
</dbReference>
<dbReference type="CDD" id="cd01744">
    <property type="entry name" value="GATase1_CPSase"/>
    <property type="match status" value="1"/>
</dbReference>
<dbReference type="Gene3D" id="3.40.50.880">
    <property type="match status" value="1"/>
</dbReference>
<dbReference type="Gene3D" id="3.50.30.20">
    <property type="entry name" value="Carbamoyl-phosphate synthase small subunit, N-terminal domain"/>
    <property type="match status" value="1"/>
</dbReference>
<dbReference type="HAMAP" id="MF_01209">
    <property type="entry name" value="CPSase_S_chain"/>
    <property type="match status" value="1"/>
</dbReference>
<dbReference type="InterPro" id="IPR050472">
    <property type="entry name" value="Anth_synth/Amidotransfase"/>
</dbReference>
<dbReference type="InterPro" id="IPR006274">
    <property type="entry name" value="CarbamoylP_synth_ssu"/>
</dbReference>
<dbReference type="InterPro" id="IPR002474">
    <property type="entry name" value="CarbamoylP_synth_ssu_N"/>
</dbReference>
<dbReference type="InterPro" id="IPR036480">
    <property type="entry name" value="CarbP_synth_ssu_N_sf"/>
</dbReference>
<dbReference type="InterPro" id="IPR029062">
    <property type="entry name" value="Class_I_gatase-like"/>
</dbReference>
<dbReference type="InterPro" id="IPR035686">
    <property type="entry name" value="CPSase_GATase1"/>
</dbReference>
<dbReference type="InterPro" id="IPR017926">
    <property type="entry name" value="GATASE"/>
</dbReference>
<dbReference type="NCBIfam" id="TIGR01368">
    <property type="entry name" value="CPSaseIIsmall"/>
    <property type="match status" value="1"/>
</dbReference>
<dbReference type="NCBIfam" id="NF009475">
    <property type="entry name" value="PRK12838.1"/>
    <property type="match status" value="1"/>
</dbReference>
<dbReference type="PANTHER" id="PTHR43418:SF7">
    <property type="entry name" value="CARBAMOYL-PHOSPHATE SYNTHASE SMALL CHAIN"/>
    <property type="match status" value="1"/>
</dbReference>
<dbReference type="PANTHER" id="PTHR43418">
    <property type="entry name" value="MULTIFUNCTIONAL TRYPTOPHAN BIOSYNTHESIS PROTEIN-RELATED"/>
    <property type="match status" value="1"/>
</dbReference>
<dbReference type="Pfam" id="PF00988">
    <property type="entry name" value="CPSase_sm_chain"/>
    <property type="match status" value="1"/>
</dbReference>
<dbReference type="Pfam" id="PF00117">
    <property type="entry name" value="GATase"/>
    <property type="match status" value="1"/>
</dbReference>
<dbReference type="PRINTS" id="PR00097">
    <property type="entry name" value="ANTSNTHASEII"/>
</dbReference>
<dbReference type="PRINTS" id="PR00099">
    <property type="entry name" value="CPSGATASE"/>
</dbReference>
<dbReference type="PRINTS" id="PR00096">
    <property type="entry name" value="GATASE"/>
</dbReference>
<dbReference type="SMART" id="SM01097">
    <property type="entry name" value="CPSase_sm_chain"/>
    <property type="match status" value="1"/>
</dbReference>
<dbReference type="SUPFAM" id="SSF52021">
    <property type="entry name" value="Carbamoyl phosphate synthetase, small subunit N-terminal domain"/>
    <property type="match status" value="1"/>
</dbReference>
<dbReference type="SUPFAM" id="SSF52317">
    <property type="entry name" value="Class I glutamine amidotransferase-like"/>
    <property type="match status" value="1"/>
</dbReference>
<dbReference type="PROSITE" id="PS51273">
    <property type="entry name" value="GATASE_TYPE_1"/>
    <property type="match status" value="1"/>
</dbReference>
<reference key="1">
    <citation type="journal article" date="2000" name="Nucleic Acids Res.">
        <title>Complete genome sequence of the alkaliphilic bacterium Bacillus halodurans and genomic sequence comparison with Bacillus subtilis.</title>
        <authorList>
            <person name="Takami H."/>
            <person name="Nakasone K."/>
            <person name="Takaki Y."/>
            <person name="Maeno G."/>
            <person name="Sasaki R."/>
            <person name="Masui N."/>
            <person name="Fuji F."/>
            <person name="Hirama C."/>
            <person name="Nakamura Y."/>
            <person name="Ogasawara N."/>
            <person name="Kuhara S."/>
            <person name="Horikoshi K."/>
        </authorList>
    </citation>
    <scope>NUCLEOTIDE SEQUENCE [LARGE SCALE GENOMIC DNA]</scope>
    <source>
        <strain>ATCC BAA-125 / DSM 18197 / FERM 7344 / JCM 9153 / C-125</strain>
    </source>
</reference>